<sequence length="238" mass="25404">MCGIKQEMSGESSGSPCSSASAERQHQTVWTAPPKRPAGRTKFRETRHPVFRGVRRRGNAGRWVCEVRVPGRRGCRLWLGTFDTAEGAARAHDAAMLAINAGGGGGGGACCLNFADSAWLLAVPRSYRTLADVRHAVAEAVEDFFRRRLADDALSATSSSSTTPSTPRTDDEEESAATDGDESSSPASDLAFELDVLSDMGWDLYYASLAQGMLMEPPSAALGDDGDAILADVPLWSY</sequence>
<gene>
    <name type="primary">DREB1A</name>
    <name type="synonym">CBF3</name>
    <name type="synonym">ERF24</name>
    <name type="ORF">OsI_031032</name>
</gene>
<name>DRE1A_ORYSI</name>
<keyword id="KW-0010">Activator</keyword>
<keyword id="KW-0238">DNA-binding</keyword>
<keyword id="KW-0539">Nucleus</keyword>
<keyword id="KW-1185">Reference proteome</keyword>
<keyword id="KW-0346">Stress response</keyword>
<keyword id="KW-0804">Transcription</keyword>
<keyword id="KW-0805">Transcription regulation</keyword>
<dbReference type="EMBL" id="CM000134">
    <property type="protein sequence ID" value="EAZ09800.1"/>
    <property type="molecule type" value="Genomic_DNA"/>
</dbReference>
<dbReference type="STRING" id="39946.A2Z389"/>
<dbReference type="EnsemblPlants" id="BGIOSGA029415-TA">
    <property type="protein sequence ID" value="BGIOSGA029415-PA"/>
    <property type="gene ID" value="BGIOSGA029415"/>
</dbReference>
<dbReference type="Gramene" id="BGIOSGA029415-TA">
    <property type="protein sequence ID" value="BGIOSGA029415-PA"/>
    <property type="gene ID" value="BGIOSGA029415"/>
</dbReference>
<dbReference type="HOGENOM" id="CLU_063331_1_0_1"/>
<dbReference type="OMA" id="EMDVFND"/>
<dbReference type="Proteomes" id="UP000007015">
    <property type="component" value="Chromosome 9"/>
</dbReference>
<dbReference type="ExpressionAtlas" id="A2Z389">
    <property type="expression patterns" value="differential"/>
</dbReference>
<dbReference type="GO" id="GO:0005634">
    <property type="term" value="C:nucleus"/>
    <property type="evidence" value="ECO:0007669"/>
    <property type="project" value="UniProtKB-SubCell"/>
</dbReference>
<dbReference type="GO" id="GO:0003677">
    <property type="term" value="F:DNA binding"/>
    <property type="evidence" value="ECO:0007669"/>
    <property type="project" value="UniProtKB-KW"/>
</dbReference>
<dbReference type="GO" id="GO:0003700">
    <property type="term" value="F:DNA-binding transcription factor activity"/>
    <property type="evidence" value="ECO:0007669"/>
    <property type="project" value="InterPro"/>
</dbReference>
<dbReference type="CDD" id="cd00018">
    <property type="entry name" value="AP2"/>
    <property type="match status" value="1"/>
</dbReference>
<dbReference type="Gene3D" id="3.30.730.10">
    <property type="entry name" value="AP2/ERF domain"/>
    <property type="match status" value="1"/>
</dbReference>
<dbReference type="InterPro" id="IPR001471">
    <property type="entry name" value="AP2/ERF_dom"/>
</dbReference>
<dbReference type="InterPro" id="IPR036955">
    <property type="entry name" value="AP2/ERF_dom_sf"/>
</dbReference>
<dbReference type="InterPro" id="IPR016177">
    <property type="entry name" value="DNA-bd_dom_sf"/>
</dbReference>
<dbReference type="InterPro" id="IPR045277">
    <property type="entry name" value="DRE1A-I"/>
</dbReference>
<dbReference type="PANTHER" id="PTHR31839:SF10">
    <property type="entry name" value="DEHYDRATION-RESPONSIVE ELEMENT-BINDING PROTEIN 1A"/>
    <property type="match status" value="1"/>
</dbReference>
<dbReference type="PANTHER" id="PTHR31839">
    <property type="entry name" value="DEHYDRATION-RESPONSIVE ELEMENT-BINDING PROTEIN 1D"/>
    <property type="match status" value="1"/>
</dbReference>
<dbReference type="Pfam" id="PF00847">
    <property type="entry name" value="AP2"/>
    <property type="match status" value="1"/>
</dbReference>
<dbReference type="PRINTS" id="PR00367">
    <property type="entry name" value="ETHRSPELEMNT"/>
</dbReference>
<dbReference type="SMART" id="SM00380">
    <property type="entry name" value="AP2"/>
    <property type="match status" value="1"/>
</dbReference>
<dbReference type="SUPFAM" id="SSF54171">
    <property type="entry name" value="DNA-binding domain"/>
    <property type="match status" value="1"/>
</dbReference>
<dbReference type="PROSITE" id="PS51032">
    <property type="entry name" value="AP2_ERF"/>
    <property type="match status" value="1"/>
</dbReference>
<organism>
    <name type="scientific">Oryza sativa subsp. indica</name>
    <name type="common">Rice</name>
    <dbReference type="NCBI Taxonomy" id="39946"/>
    <lineage>
        <taxon>Eukaryota</taxon>
        <taxon>Viridiplantae</taxon>
        <taxon>Streptophyta</taxon>
        <taxon>Embryophyta</taxon>
        <taxon>Tracheophyta</taxon>
        <taxon>Spermatophyta</taxon>
        <taxon>Magnoliopsida</taxon>
        <taxon>Liliopsida</taxon>
        <taxon>Poales</taxon>
        <taxon>Poaceae</taxon>
        <taxon>BOP clade</taxon>
        <taxon>Oryzoideae</taxon>
        <taxon>Oryzeae</taxon>
        <taxon>Oryzinae</taxon>
        <taxon>Oryza</taxon>
        <taxon>Oryza sativa</taxon>
    </lineage>
</organism>
<protein>
    <recommendedName>
        <fullName>Dehydration-responsive element-binding protein 1A</fullName>
        <shortName>Protein DREB1A</shortName>
    </recommendedName>
    <alternativeName>
        <fullName>Protein C-repeat-binding factor 3</fullName>
        <shortName>rCBF3</shortName>
    </alternativeName>
</protein>
<evidence type="ECO:0000250" key="1"/>
<evidence type="ECO:0000255" key="2">
    <source>
        <dbReference type="PROSITE-ProRule" id="PRU00366"/>
    </source>
</evidence>
<evidence type="ECO:0000256" key="3">
    <source>
        <dbReference type="SAM" id="MobiDB-lite"/>
    </source>
</evidence>
<evidence type="ECO:0000305" key="4"/>
<reference key="1">
    <citation type="journal article" date="2005" name="PLoS Biol.">
        <title>The genomes of Oryza sativa: a history of duplications.</title>
        <authorList>
            <person name="Yu J."/>
            <person name="Wang J."/>
            <person name="Lin W."/>
            <person name="Li S."/>
            <person name="Li H."/>
            <person name="Zhou J."/>
            <person name="Ni P."/>
            <person name="Dong W."/>
            <person name="Hu S."/>
            <person name="Zeng C."/>
            <person name="Zhang J."/>
            <person name="Zhang Y."/>
            <person name="Li R."/>
            <person name="Xu Z."/>
            <person name="Li S."/>
            <person name="Li X."/>
            <person name="Zheng H."/>
            <person name="Cong L."/>
            <person name="Lin L."/>
            <person name="Yin J."/>
            <person name="Geng J."/>
            <person name="Li G."/>
            <person name="Shi J."/>
            <person name="Liu J."/>
            <person name="Lv H."/>
            <person name="Li J."/>
            <person name="Wang J."/>
            <person name="Deng Y."/>
            <person name="Ran L."/>
            <person name="Shi X."/>
            <person name="Wang X."/>
            <person name="Wu Q."/>
            <person name="Li C."/>
            <person name="Ren X."/>
            <person name="Wang J."/>
            <person name="Wang X."/>
            <person name="Li D."/>
            <person name="Liu D."/>
            <person name="Zhang X."/>
            <person name="Ji Z."/>
            <person name="Zhao W."/>
            <person name="Sun Y."/>
            <person name="Zhang Z."/>
            <person name="Bao J."/>
            <person name="Han Y."/>
            <person name="Dong L."/>
            <person name="Ji J."/>
            <person name="Chen P."/>
            <person name="Wu S."/>
            <person name="Liu J."/>
            <person name="Xiao Y."/>
            <person name="Bu D."/>
            <person name="Tan J."/>
            <person name="Yang L."/>
            <person name="Ye C."/>
            <person name="Zhang J."/>
            <person name="Xu J."/>
            <person name="Zhou Y."/>
            <person name="Yu Y."/>
            <person name="Zhang B."/>
            <person name="Zhuang S."/>
            <person name="Wei H."/>
            <person name="Liu B."/>
            <person name="Lei M."/>
            <person name="Yu H."/>
            <person name="Li Y."/>
            <person name="Xu H."/>
            <person name="Wei S."/>
            <person name="He X."/>
            <person name="Fang L."/>
            <person name="Zhang Z."/>
            <person name="Zhang Y."/>
            <person name="Huang X."/>
            <person name="Su Z."/>
            <person name="Tong W."/>
            <person name="Li J."/>
            <person name="Tong Z."/>
            <person name="Li S."/>
            <person name="Ye J."/>
            <person name="Wang L."/>
            <person name="Fang L."/>
            <person name="Lei T."/>
            <person name="Chen C.-S."/>
            <person name="Chen H.-C."/>
            <person name="Xu Z."/>
            <person name="Li H."/>
            <person name="Huang H."/>
            <person name="Zhang F."/>
            <person name="Xu H."/>
            <person name="Li N."/>
            <person name="Zhao C."/>
            <person name="Li S."/>
            <person name="Dong L."/>
            <person name="Huang Y."/>
            <person name="Li L."/>
            <person name="Xi Y."/>
            <person name="Qi Q."/>
            <person name="Li W."/>
            <person name="Zhang B."/>
            <person name="Hu W."/>
            <person name="Zhang Y."/>
            <person name="Tian X."/>
            <person name="Jiao Y."/>
            <person name="Liang X."/>
            <person name="Jin J."/>
            <person name="Gao L."/>
            <person name="Zheng W."/>
            <person name="Hao B."/>
            <person name="Liu S.-M."/>
            <person name="Wang W."/>
            <person name="Yuan L."/>
            <person name="Cao M."/>
            <person name="McDermott J."/>
            <person name="Samudrala R."/>
            <person name="Wang J."/>
            <person name="Wong G.K.-S."/>
            <person name="Yang H."/>
        </authorList>
    </citation>
    <scope>NUCLEOTIDE SEQUENCE [LARGE SCALE GENOMIC DNA]</scope>
    <source>
        <strain>cv. 93-11</strain>
    </source>
</reference>
<proteinExistence type="inferred from homology"/>
<feature type="chain" id="PRO_0000323030" description="Dehydration-responsive element-binding protein 1A">
    <location>
        <begin position="1"/>
        <end position="238"/>
    </location>
</feature>
<feature type="DNA-binding region" description="AP2/ERF" evidence="2">
    <location>
        <begin position="50"/>
        <end position="115"/>
    </location>
</feature>
<feature type="region of interest" description="Disordered" evidence="3">
    <location>
        <begin position="1"/>
        <end position="41"/>
    </location>
</feature>
<feature type="region of interest" description="Disordered" evidence="3">
    <location>
        <begin position="155"/>
        <end position="188"/>
    </location>
</feature>
<feature type="compositionally biased region" description="Low complexity" evidence="3">
    <location>
        <begin position="9"/>
        <end position="22"/>
    </location>
</feature>
<feature type="compositionally biased region" description="Low complexity" evidence="3">
    <location>
        <begin position="155"/>
        <end position="167"/>
    </location>
</feature>
<feature type="compositionally biased region" description="Acidic residues" evidence="3">
    <location>
        <begin position="170"/>
        <end position="182"/>
    </location>
</feature>
<comment type="function">
    <text evidence="1">Transcriptional activator that binds specifically to the DNA sequence 5'-[AG]CCGAC-3'. Binding to the C-repeat/DRE element mediates high salinity- and dehydration-inducible transcription. Confers resistance to high salt, cold and drought stress (By similarity).</text>
</comment>
<comment type="subcellular location">
    <subcellularLocation>
        <location evidence="4">Nucleus</location>
    </subcellularLocation>
</comment>
<comment type="similarity">
    <text evidence="4">Belongs to the AP2/ERF transcription factor family. ERF subfamily.</text>
</comment>
<accession>A2Z389</accession>